<name>PYRG_PSYCK</name>
<proteinExistence type="inferred from homology"/>
<accession>Q1Q9K1</accession>
<feature type="chain" id="PRO_0000266190" description="CTP synthase">
    <location>
        <begin position="1"/>
        <end position="544"/>
    </location>
</feature>
<feature type="domain" description="Glutamine amidotransferase type-1" evidence="1">
    <location>
        <begin position="291"/>
        <end position="543"/>
    </location>
</feature>
<feature type="region of interest" description="Amidoligase domain" evidence="1">
    <location>
        <begin position="1"/>
        <end position="266"/>
    </location>
</feature>
<feature type="active site" description="Nucleophile; for glutamine hydrolysis" evidence="1">
    <location>
        <position position="381"/>
    </location>
</feature>
<feature type="active site" evidence="1">
    <location>
        <position position="516"/>
    </location>
</feature>
<feature type="active site" evidence="1">
    <location>
        <position position="518"/>
    </location>
</feature>
<feature type="binding site" evidence="1">
    <location>
        <position position="13"/>
    </location>
    <ligand>
        <name>CTP</name>
        <dbReference type="ChEBI" id="CHEBI:37563"/>
        <note>allosteric inhibitor</note>
    </ligand>
</feature>
<feature type="binding site" evidence="1">
    <location>
        <position position="13"/>
    </location>
    <ligand>
        <name>UTP</name>
        <dbReference type="ChEBI" id="CHEBI:46398"/>
    </ligand>
</feature>
<feature type="binding site" evidence="1">
    <location>
        <begin position="14"/>
        <end position="19"/>
    </location>
    <ligand>
        <name>ATP</name>
        <dbReference type="ChEBI" id="CHEBI:30616"/>
    </ligand>
</feature>
<feature type="binding site" evidence="1">
    <location>
        <position position="71"/>
    </location>
    <ligand>
        <name>ATP</name>
        <dbReference type="ChEBI" id="CHEBI:30616"/>
    </ligand>
</feature>
<feature type="binding site" evidence="1">
    <location>
        <position position="71"/>
    </location>
    <ligand>
        <name>Mg(2+)</name>
        <dbReference type="ChEBI" id="CHEBI:18420"/>
    </ligand>
</feature>
<feature type="binding site" evidence="1">
    <location>
        <position position="140"/>
    </location>
    <ligand>
        <name>Mg(2+)</name>
        <dbReference type="ChEBI" id="CHEBI:18420"/>
    </ligand>
</feature>
<feature type="binding site" evidence="1">
    <location>
        <begin position="147"/>
        <end position="149"/>
    </location>
    <ligand>
        <name>CTP</name>
        <dbReference type="ChEBI" id="CHEBI:37563"/>
        <note>allosteric inhibitor</note>
    </ligand>
</feature>
<feature type="binding site" evidence="1">
    <location>
        <begin position="187"/>
        <end position="192"/>
    </location>
    <ligand>
        <name>CTP</name>
        <dbReference type="ChEBI" id="CHEBI:37563"/>
        <note>allosteric inhibitor</note>
    </ligand>
</feature>
<feature type="binding site" evidence="1">
    <location>
        <begin position="187"/>
        <end position="192"/>
    </location>
    <ligand>
        <name>UTP</name>
        <dbReference type="ChEBI" id="CHEBI:46398"/>
    </ligand>
</feature>
<feature type="binding site" evidence="1">
    <location>
        <position position="223"/>
    </location>
    <ligand>
        <name>CTP</name>
        <dbReference type="ChEBI" id="CHEBI:37563"/>
        <note>allosteric inhibitor</note>
    </ligand>
</feature>
<feature type="binding site" evidence="1">
    <location>
        <position position="223"/>
    </location>
    <ligand>
        <name>UTP</name>
        <dbReference type="ChEBI" id="CHEBI:46398"/>
    </ligand>
</feature>
<feature type="binding site" evidence="1">
    <location>
        <position position="354"/>
    </location>
    <ligand>
        <name>L-glutamine</name>
        <dbReference type="ChEBI" id="CHEBI:58359"/>
    </ligand>
</feature>
<feature type="binding site" evidence="1">
    <location>
        <begin position="382"/>
        <end position="385"/>
    </location>
    <ligand>
        <name>L-glutamine</name>
        <dbReference type="ChEBI" id="CHEBI:58359"/>
    </ligand>
</feature>
<feature type="binding site" evidence="1">
    <location>
        <position position="404"/>
    </location>
    <ligand>
        <name>L-glutamine</name>
        <dbReference type="ChEBI" id="CHEBI:58359"/>
    </ligand>
</feature>
<feature type="binding site" evidence="1">
    <location>
        <position position="471"/>
    </location>
    <ligand>
        <name>L-glutamine</name>
        <dbReference type="ChEBI" id="CHEBI:58359"/>
    </ligand>
</feature>
<keyword id="KW-0067">ATP-binding</keyword>
<keyword id="KW-0315">Glutamine amidotransferase</keyword>
<keyword id="KW-0436">Ligase</keyword>
<keyword id="KW-0460">Magnesium</keyword>
<keyword id="KW-0479">Metal-binding</keyword>
<keyword id="KW-0547">Nucleotide-binding</keyword>
<keyword id="KW-0665">Pyrimidine biosynthesis</keyword>
<reference key="1">
    <citation type="submission" date="2006-03" db="EMBL/GenBank/DDBJ databases">
        <title>Complete sequence of chromosome of Psychrobacter cryohalolentis K5.</title>
        <authorList>
            <consortium name="US DOE Joint Genome Institute"/>
            <person name="Copeland A."/>
            <person name="Lucas S."/>
            <person name="Lapidus A."/>
            <person name="Barry K."/>
            <person name="Detter J.C."/>
            <person name="Glavina T."/>
            <person name="Hammon N."/>
            <person name="Israni S."/>
            <person name="Dalin E."/>
            <person name="Tice H."/>
            <person name="Pitluck S."/>
            <person name="Brettin T."/>
            <person name="Bruce D."/>
            <person name="Han C."/>
            <person name="Tapia R."/>
            <person name="Sims D.R."/>
            <person name="Gilna P."/>
            <person name="Schmutz J."/>
            <person name="Larimer F."/>
            <person name="Land M."/>
            <person name="Hauser L."/>
            <person name="Kyrpides N."/>
            <person name="Kim E."/>
            <person name="Richardson P."/>
        </authorList>
    </citation>
    <scope>NUCLEOTIDE SEQUENCE [LARGE SCALE GENOMIC DNA]</scope>
    <source>
        <strain>ATCC BAA-1226 / DSM 17306 / VKM B-2378 / K5</strain>
    </source>
</reference>
<evidence type="ECO:0000255" key="1">
    <source>
        <dbReference type="HAMAP-Rule" id="MF_01227"/>
    </source>
</evidence>
<gene>
    <name evidence="1" type="primary">pyrG</name>
    <name type="ordered locus">Pcryo_1875</name>
</gene>
<protein>
    <recommendedName>
        <fullName evidence="1">CTP synthase</fullName>
        <ecNumber evidence="1">6.3.4.2</ecNumber>
    </recommendedName>
    <alternativeName>
        <fullName evidence="1">Cytidine 5'-triphosphate synthase</fullName>
    </alternativeName>
    <alternativeName>
        <fullName evidence="1">Cytidine triphosphate synthetase</fullName>
        <shortName evidence="1">CTP synthetase</shortName>
        <shortName evidence="1">CTPS</shortName>
    </alternativeName>
    <alternativeName>
        <fullName evidence="1">UTP--ammonia ligase</fullName>
    </alternativeName>
</protein>
<organism>
    <name type="scientific">Psychrobacter cryohalolentis (strain ATCC BAA-1226 / DSM 17306 / VKM B-2378 / K5)</name>
    <dbReference type="NCBI Taxonomy" id="335284"/>
    <lineage>
        <taxon>Bacteria</taxon>
        <taxon>Pseudomonadati</taxon>
        <taxon>Pseudomonadota</taxon>
        <taxon>Gammaproteobacteria</taxon>
        <taxon>Moraxellales</taxon>
        <taxon>Moraxellaceae</taxon>
        <taxon>Psychrobacter</taxon>
    </lineage>
</organism>
<sequence>MTKFIFVTGGVVSSLGKGITAASLAAVLEARGVNVTMTKMDPYINVDPGTMSPFQHGEVFVTEDGAETDLDLGYYERFLRHSKMSKSNNFTSGRIYQNVLNKERRGEYLGGTVQVIPHITDEIKSKILASGEGYDVAIIEIGGTVGDIESLPFMEAVRQMQVELGRNRAMLMHLTLVPYIASAGETKTKPTQHSVKELRSIGLQPDILICRSDHHISQDNRRKIALFTNVEERAVIMCEDAQSIYQIPRTLHEQDLDDLICERFGLDLPEADLSDWDKVVEAQLNPESTVTVAMVGKYVELPDAYKSINEALLHAGITHKADVKIDYIDAERLEDDDSLLAQLHNADAILVPGGFGERGTMGKIKAITYARENNVPYLGICLGMQLAVIEYARNVLHIDANSSEFDRKTAEPIIGLITEWLDERGELQIRSDDSDLGGTMRLGAQQAELVAGSKLAQIYGANNITERHRHRYEMNNRYIEPLEQAGMTVSGYSAKQHLVESVELADHPWFVAVQFHPEFTSSPRGGHPLFNSFVKAAKNYSEAK</sequence>
<comment type="function">
    <text evidence="1">Catalyzes the ATP-dependent amination of UTP to CTP with either L-glutamine or ammonia as the source of nitrogen. Regulates intracellular CTP levels through interactions with the four ribonucleotide triphosphates.</text>
</comment>
<comment type="catalytic activity">
    <reaction evidence="1">
        <text>UTP + L-glutamine + ATP + H2O = CTP + L-glutamate + ADP + phosphate + 2 H(+)</text>
        <dbReference type="Rhea" id="RHEA:26426"/>
        <dbReference type="ChEBI" id="CHEBI:15377"/>
        <dbReference type="ChEBI" id="CHEBI:15378"/>
        <dbReference type="ChEBI" id="CHEBI:29985"/>
        <dbReference type="ChEBI" id="CHEBI:30616"/>
        <dbReference type="ChEBI" id="CHEBI:37563"/>
        <dbReference type="ChEBI" id="CHEBI:43474"/>
        <dbReference type="ChEBI" id="CHEBI:46398"/>
        <dbReference type="ChEBI" id="CHEBI:58359"/>
        <dbReference type="ChEBI" id="CHEBI:456216"/>
        <dbReference type="EC" id="6.3.4.2"/>
    </reaction>
</comment>
<comment type="catalytic activity">
    <reaction evidence="1">
        <text>L-glutamine + H2O = L-glutamate + NH4(+)</text>
        <dbReference type="Rhea" id="RHEA:15889"/>
        <dbReference type="ChEBI" id="CHEBI:15377"/>
        <dbReference type="ChEBI" id="CHEBI:28938"/>
        <dbReference type="ChEBI" id="CHEBI:29985"/>
        <dbReference type="ChEBI" id="CHEBI:58359"/>
    </reaction>
</comment>
<comment type="catalytic activity">
    <reaction evidence="1">
        <text>UTP + NH4(+) + ATP = CTP + ADP + phosphate + 2 H(+)</text>
        <dbReference type="Rhea" id="RHEA:16597"/>
        <dbReference type="ChEBI" id="CHEBI:15378"/>
        <dbReference type="ChEBI" id="CHEBI:28938"/>
        <dbReference type="ChEBI" id="CHEBI:30616"/>
        <dbReference type="ChEBI" id="CHEBI:37563"/>
        <dbReference type="ChEBI" id="CHEBI:43474"/>
        <dbReference type="ChEBI" id="CHEBI:46398"/>
        <dbReference type="ChEBI" id="CHEBI:456216"/>
    </reaction>
</comment>
<comment type="activity regulation">
    <text evidence="1">Allosterically activated by GTP, when glutamine is the substrate; GTP has no effect on the reaction when ammonia is the substrate. The allosteric effector GTP functions by stabilizing the protein conformation that binds the tetrahedral intermediate(s) formed during glutamine hydrolysis. Inhibited by the product CTP, via allosteric rather than competitive inhibition.</text>
</comment>
<comment type="pathway">
    <text evidence="1">Pyrimidine metabolism; CTP biosynthesis via de novo pathway; CTP from UDP: step 2/2.</text>
</comment>
<comment type="subunit">
    <text evidence="1">Homotetramer.</text>
</comment>
<comment type="miscellaneous">
    <text evidence="1">CTPSs have evolved a hybrid strategy for distinguishing between UTP and CTP. The overlapping regions of the product feedback inhibitory and substrate sites recognize a common feature in both compounds, the triphosphate moiety. To differentiate isosteric substrate and product pyrimidine rings, an additional pocket far from the expected kinase/ligase catalytic site, specifically recognizes the cytosine and ribose portions of the product inhibitor.</text>
</comment>
<comment type="similarity">
    <text evidence="1">Belongs to the CTP synthase family.</text>
</comment>
<dbReference type="EC" id="6.3.4.2" evidence="1"/>
<dbReference type="EMBL" id="CP000323">
    <property type="protein sequence ID" value="ABE75652.1"/>
    <property type="molecule type" value="Genomic_DNA"/>
</dbReference>
<dbReference type="RefSeq" id="WP_011514195.1">
    <property type="nucleotide sequence ID" value="NC_007969.1"/>
</dbReference>
<dbReference type="SMR" id="Q1Q9K1"/>
<dbReference type="STRING" id="335284.Pcryo_1875"/>
<dbReference type="MEROPS" id="C26.964"/>
<dbReference type="KEGG" id="pcr:Pcryo_1875"/>
<dbReference type="eggNOG" id="COG0504">
    <property type="taxonomic scope" value="Bacteria"/>
</dbReference>
<dbReference type="HOGENOM" id="CLU_011675_5_0_6"/>
<dbReference type="UniPathway" id="UPA00159">
    <property type="reaction ID" value="UER00277"/>
</dbReference>
<dbReference type="Proteomes" id="UP000002425">
    <property type="component" value="Chromosome"/>
</dbReference>
<dbReference type="GO" id="GO:0005829">
    <property type="term" value="C:cytosol"/>
    <property type="evidence" value="ECO:0007669"/>
    <property type="project" value="TreeGrafter"/>
</dbReference>
<dbReference type="GO" id="GO:0005524">
    <property type="term" value="F:ATP binding"/>
    <property type="evidence" value="ECO:0007669"/>
    <property type="project" value="UniProtKB-KW"/>
</dbReference>
<dbReference type="GO" id="GO:0003883">
    <property type="term" value="F:CTP synthase activity"/>
    <property type="evidence" value="ECO:0007669"/>
    <property type="project" value="UniProtKB-UniRule"/>
</dbReference>
<dbReference type="GO" id="GO:0004359">
    <property type="term" value="F:glutaminase activity"/>
    <property type="evidence" value="ECO:0007669"/>
    <property type="project" value="RHEA"/>
</dbReference>
<dbReference type="GO" id="GO:0042802">
    <property type="term" value="F:identical protein binding"/>
    <property type="evidence" value="ECO:0007669"/>
    <property type="project" value="TreeGrafter"/>
</dbReference>
<dbReference type="GO" id="GO:0046872">
    <property type="term" value="F:metal ion binding"/>
    <property type="evidence" value="ECO:0007669"/>
    <property type="project" value="UniProtKB-KW"/>
</dbReference>
<dbReference type="GO" id="GO:0044210">
    <property type="term" value="P:'de novo' CTP biosynthetic process"/>
    <property type="evidence" value="ECO:0007669"/>
    <property type="project" value="UniProtKB-UniRule"/>
</dbReference>
<dbReference type="GO" id="GO:0019856">
    <property type="term" value="P:pyrimidine nucleobase biosynthetic process"/>
    <property type="evidence" value="ECO:0007669"/>
    <property type="project" value="TreeGrafter"/>
</dbReference>
<dbReference type="CDD" id="cd03113">
    <property type="entry name" value="CTPS_N"/>
    <property type="match status" value="1"/>
</dbReference>
<dbReference type="CDD" id="cd01746">
    <property type="entry name" value="GATase1_CTP_Synthase"/>
    <property type="match status" value="1"/>
</dbReference>
<dbReference type="FunFam" id="3.40.50.300:FF:000009">
    <property type="entry name" value="CTP synthase"/>
    <property type="match status" value="1"/>
</dbReference>
<dbReference type="FunFam" id="3.40.50.880:FF:000002">
    <property type="entry name" value="CTP synthase"/>
    <property type="match status" value="1"/>
</dbReference>
<dbReference type="Gene3D" id="3.40.50.880">
    <property type="match status" value="1"/>
</dbReference>
<dbReference type="Gene3D" id="3.40.50.300">
    <property type="entry name" value="P-loop containing nucleotide triphosphate hydrolases"/>
    <property type="match status" value="1"/>
</dbReference>
<dbReference type="HAMAP" id="MF_01227">
    <property type="entry name" value="PyrG"/>
    <property type="match status" value="1"/>
</dbReference>
<dbReference type="InterPro" id="IPR029062">
    <property type="entry name" value="Class_I_gatase-like"/>
</dbReference>
<dbReference type="InterPro" id="IPR004468">
    <property type="entry name" value="CTP_synthase"/>
</dbReference>
<dbReference type="InterPro" id="IPR017456">
    <property type="entry name" value="CTP_synthase_N"/>
</dbReference>
<dbReference type="InterPro" id="IPR017926">
    <property type="entry name" value="GATASE"/>
</dbReference>
<dbReference type="InterPro" id="IPR033828">
    <property type="entry name" value="GATase1_CTP_Synthase"/>
</dbReference>
<dbReference type="InterPro" id="IPR027417">
    <property type="entry name" value="P-loop_NTPase"/>
</dbReference>
<dbReference type="NCBIfam" id="NF003792">
    <property type="entry name" value="PRK05380.1"/>
    <property type="match status" value="1"/>
</dbReference>
<dbReference type="NCBIfam" id="TIGR00337">
    <property type="entry name" value="PyrG"/>
    <property type="match status" value="1"/>
</dbReference>
<dbReference type="PANTHER" id="PTHR11550">
    <property type="entry name" value="CTP SYNTHASE"/>
    <property type="match status" value="1"/>
</dbReference>
<dbReference type="PANTHER" id="PTHR11550:SF0">
    <property type="entry name" value="CTP SYNTHASE-RELATED"/>
    <property type="match status" value="1"/>
</dbReference>
<dbReference type="Pfam" id="PF06418">
    <property type="entry name" value="CTP_synth_N"/>
    <property type="match status" value="1"/>
</dbReference>
<dbReference type="Pfam" id="PF00117">
    <property type="entry name" value="GATase"/>
    <property type="match status" value="1"/>
</dbReference>
<dbReference type="SUPFAM" id="SSF52317">
    <property type="entry name" value="Class I glutamine amidotransferase-like"/>
    <property type="match status" value="1"/>
</dbReference>
<dbReference type="SUPFAM" id="SSF52540">
    <property type="entry name" value="P-loop containing nucleoside triphosphate hydrolases"/>
    <property type="match status" value="1"/>
</dbReference>
<dbReference type="PROSITE" id="PS51273">
    <property type="entry name" value="GATASE_TYPE_1"/>
    <property type="match status" value="1"/>
</dbReference>